<dbReference type="EC" id="1.13.11.16" evidence="1"/>
<dbReference type="EMBL" id="CU928164">
    <property type="protein sequence ID" value="CAR16470.1"/>
    <property type="molecule type" value="Genomic_DNA"/>
</dbReference>
<dbReference type="RefSeq" id="WP_000543457.1">
    <property type="nucleotide sequence ID" value="NC_011750.1"/>
</dbReference>
<dbReference type="RefSeq" id="YP_002406372.1">
    <property type="nucleotide sequence ID" value="NC_011750.1"/>
</dbReference>
<dbReference type="SMR" id="B7NK07"/>
<dbReference type="STRING" id="585057.ECIAI39_0330"/>
<dbReference type="GeneID" id="93777107"/>
<dbReference type="KEGG" id="ect:ECIAI39_0330"/>
<dbReference type="PATRIC" id="fig|585057.6.peg.357"/>
<dbReference type="HOGENOM" id="CLU_078149_0_0_6"/>
<dbReference type="UniPathway" id="UPA00714"/>
<dbReference type="Proteomes" id="UP000000749">
    <property type="component" value="Chromosome"/>
</dbReference>
<dbReference type="GO" id="GO:0047070">
    <property type="term" value="F:3-carboxyethylcatechol 2,3-dioxygenase activity"/>
    <property type="evidence" value="ECO:0007669"/>
    <property type="project" value="UniProtKB-UniRule"/>
</dbReference>
<dbReference type="GO" id="GO:0008198">
    <property type="term" value="F:ferrous iron binding"/>
    <property type="evidence" value="ECO:0007669"/>
    <property type="project" value="InterPro"/>
</dbReference>
<dbReference type="GO" id="GO:0019380">
    <property type="term" value="P:3-phenylpropionate catabolic process"/>
    <property type="evidence" value="ECO:0007669"/>
    <property type="project" value="UniProtKB-UniRule"/>
</dbReference>
<dbReference type="CDD" id="cd07365">
    <property type="entry name" value="MhpB_like"/>
    <property type="match status" value="1"/>
</dbReference>
<dbReference type="Gene3D" id="3.40.830.10">
    <property type="entry name" value="LigB-like"/>
    <property type="match status" value="1"/>
</dbReference>
<dbReference type="HAMAP" id="MF_01653">
    <property type="entry name" value="MhpB"/>
    <property type="match status" value="1"/>
</dbReference>
<dbReference type="InterPro" id="IPR023789">
    <property type="entry name" value="DHPP/DHXA_dioxygenase"/>
</dbReference>
<dbReference type="InterPro" id="IPR004183">
    <property type="entry name" value="Xdiol_dOase_suB"/>
</dbReference>
<dbReference type="NCBIfam" id="NF009907">
    <property type="entry name" value="PRK13370.1-1"/>
    <property type="match status" value="1"/>
</dbReference>
<dbReference type="NCBIfam" id="NF009910">
    <property type="entry name" value="PRK13370.1-4"/>
    <property type="match status" value="1"/>
</dbReference>
<dbReference type="Pfam" id="PF02900">
    <property type="entry name" value="LigB"/>
    <property type="match status" value="1"/>
</dbReference>
<dbReference type="SUPFAM" id="SSF53213">
    <property type="entry name" value="LigB-like"/>
    <property type="match status" value="1"/>
</dbReference>
<keyword id="KW-0058">Aromatic hydrocarbons catabolism</keyword>
<keyword id="KW-0223">Dioxygenase</keyword>
<keyword id="KW-0408">Iron</keyword>
<keyword id="KW-0560">Oxidoreductase</keyword>
<feature type="chain" id="PRO_1000187002" description="2,3-dihydroxyphenylpropionate/2,3-dihydroxicinnamic acid 1,2-dioxygenase">
    <location>
        <begin position="1"/>
        <end position="314"/>
    </location>
</feature>
<feature type="active site" description="Proton donor" evidence="1">
    <location>
        <position position="115"/>
    </location>
</feature>
<feature type="active site" description="Proton acceptor" evidence="1">
    <location>
        <position position="179"/>
    </location>
</feature>
<organism>
    <name type="scientific">Escherichia coli O7:K1 (strain IAI39 / ExPEC)</name>
    <dbReference type="NCBI Taxonomy" id="585057"/>
    <lineage>
        <taxon>Bacteria</taxon>
        <taxon>Pseudomonadati</taxon>
        <taxon>Pseudomonadota</taxon>
        <taxon>Gammaproteobacteria</taxon>
        <taxon>Enterobacterales</taxon>
        <taxon>Enterobacteriaceae</taxon>
        <taxon>Escherichia</taxon>
    </lineage>
</organism>
<reference key="1">
    <citation type="journal article" date="2009" name="PLoS Genet.">
        <title>Organised genome dynamics in the Escherichia coli species results in highly diverse adaptive paths.</title>
        <authorList>
            <person name="Touchon M."/>
            <person name="Hoede C."/>
            <person name="Tenaillon O."/>
            <person name="Barbe V."/>
            <person name="Baeriswyl S."/>
            <person name="Bidet P."/>
            <person name="Bingen E."/>
            <person name="Bonacorsi S."/>
            <person name="Bouchier C."/>
            <person name="Bouvet O."/>
            <person name="Calteau A."/>
            <person name="Chiapello H."/>
            <person name="Clermont O."/>
            <person name="Cruveiller S."/>
            <person name="Danchin A."/>
            <person name="Diard M."/>
            <person name="Dossat C."/>
            <person name="Karoui M.E."/>
            <person name="Frapy E."/>
            <person name="Garry L."/>
            <person name="Ghigo J.M."/>
            <person name="Gilles A.M."/>
            <person name="Johnson J."/>
            <person name="Le Bouguenec C."/>
            <person name="Lescat M."/>
            <person name="Mangenot S."/>
            <person name="Martinez-Jehanne V."/>
            <person name="Matic I."/>
            <person name="Nassif X."/>
            <person name="Oztas S."/>
            <person name="Petit M.A."/>
            <person name="Pichon C."/>
            <person name="Rouy Z."/>
            <person name="Ruf C.S."/>
            <person name="Schneider D."/>
            <person name="Tourret J."/>
            <person name="Vacherie B."/>
            <person name="Vallenet D."/>
            <person name="Medigue C."/>
            <person name="Rocha E.P.C."/>
            <person name="Denamur E."/>
        </authorList>
    </citation>
    <scope>NUCLEOTIDE SEQUENCE [LARGE SCALE GENOMIC DNA]</scope>
    <source>
        <strain>IAI39 / ExPEC</strain>
    </source>
</reference>
<protein>
    <recommendedName>
        <fullName evidence="1">2,3-dihydroxyphenylpropionate/2,3-dihydroxicinnamic acid 1,2-dioxygenase</fullName>
        <ecNumber evidence="1">1.13.11.16</ecNumber>
    </recommendedName>
    <alternativeName>
        <fullName evidence="1">3-carboxyethylcatechol 2,3-dioxygenase</fullName>
    </alternativeName>
</protein>
<sequence>MHAYLHCLSHSPLVGYVDPAQEVLDEVNGVIASARERIAAFSPELVVLFAPDHYNGFFYDVMPPFCLGVGATAIGDFGSAAGELPVPVELAEACAHAVMKSGIDLAVSYCMQVDHGFAQPLEFLLGGLDKVPVLPVFINGVATPLPGFQRTRMLGEAIGRFTSTLNKRVLFLGSGGLSHQPPVPELAKADAHMRDRLLGSGKDLPASERELRQQRVISAAEKFVEDQRTLHPLNPIWDNQFMTLLEQGRIQELDAVSNEELSAIAGKSTHEIKTWVAAFAAISAFGNWRSEGRYYRPIPEWIAGFGSLSARTEN</sequence>
<evidence type="ECO:0000255" key="1">
    <source>
        <dbReference type="HAMAP-Rule" id="MF_01653"/>
    </source>
</evidence>
<gene>
    <name evidence="1" type="primary">mhpB</name>
    <name type="ordered locus">ECIAI39_0330</name>
</gene>
<comment type="function">
    <text evidence="1">Catalyzes the non-heme iron(II)-dependent oxidative cleavage of 2,3-dihydroxyphenylpropionic acid and 2,3-dihydroxicinnamic acid into 2-hydroxy-6-ketononadienedioate and 2-hydroxy-6-ketononatrienedioate, respectively.</text>
</comment>
<comment type="catalytic activity">
    <reaction evidence="1">
        <text>3-(2,3-dihydroxyphenyl)propanoate + O2 = (2Z,4E)-2-hydroxy-6-oxonona-2,4-dienedioate + H(+)</text>
        <dbReference type="Rhea" id="RHEA:23840"/>
        <dbReference type="ChEBI" id="CHEBI:15378"/>
        <dbReference type="ChEBI" id="CHEBI:15379"/>
        <dbReference type="ChEBI" id="CHEBI:46951"/>
        <dbReference type="ChEBI" id="CHEBI:66887"/>
        <dbReference type="EC" id="1.13.11.16"/>
    </reaction>
</comment>
<comment type="catalytic activity">
    <reaction evidence="1">
        <text>(2E)-3-(2,3-dihydroxyphenyl)prop-2-enoate + O2 = (2Z,4E,7E)-2-hydroxy-6-oxonona-2,4,7-trienedioate + H(+)</text>
        <dbReference type="Rhea" id="RHEA:25054"/>
        <dbReference type="ChEBI" id="CHEBI:15378"/>
        <dbReference type="ChEBI" id="CHEBI:15379"/>
        <dbReference type="ChEBI" id="CHEBI:58642"/>
        <dbReference type="ChEBI" id="CHEBI:66888"/>
        <dbReference type="EC" id="1.13.11.16"/>
    </reaction>
</comment>
<comment type="cofactor">
    <cofactor evidence="1">
        <name>Fe(2+)</name>
        <dbReference type="ChEBI" id="CHEBI:29033"/>
    </cofactor>
</comment>
<comment type="pathway">
    <text evidence="1">Aromatic compound metabolism; 3-phenylpropanoate degradation.</text>
</comment>
<comment type="subunit">
    <text evidence="1">Homotetramer.</text>
</comment>
<comment type="similarity">
    <text evidence="1">Belongs to the LigB/MhpB extradiol dioxygenase family.</text>
</comment>
<proteinExistence type="inferred from homology"/>
<name>MHPB_ECO7I</name>
<accession>B7NK07</accession>